<accession>Q01435</accession>
<proteinExistence type="predicted"/>
<dbReference type="EMBL" id="M89919">
    <property type="protein sequence ID" value="AAA32487.1"/>
    <property type="molecule type" value="Genomic_DNA"/>
</dbReference>
<dbReference type="EMBL" id="AF158101">
    <property type="protein sequence ID" value="AAD42463.1"/>
    <property type="molecule type" value="Genomic_DNA"/>
</dbReference>
<dbReference type="PIR" id="JS0563">
    <property type="entry name" value="E45731"/>
</dbReference>
<dbReference type="RefSeq" id="NP_049622.1">
    <property type="nucleotide sequence ID" value="NC_000866.4"/>
</dbReference>
<dbReference type="GeneID" id="1258650"/>
<dbReference type="KEGG" id="vg:1258650"/>
<dbReference type="OrthoDB" id="22737at10239"/>
<dbReference type="Proteomes" id="UP000009087">
    <property type="component" value="Segment"/>
</dbReference>
<reference key="1">
    <citation type="journal article" date="1992" name="J. Bacteriol.">
        <title>Sequence and characterization of the bacteriophage T4 comC alpha gene product, a possible transcription antitermination factor.</title>
        <authorList>
            <person name="Sanson B."/>
            <person name="Uzan M."/>
        </authorList>
    </citation>
    <scope>NUCLEOTIDE SEQUENCE [GENOMIC DNA]</scope>
</reference>
<reference key="2">
    <citation type="journal article" date="2003" name="Microbiol. Mol. Biol. Rev.">
        <title>Bacteriophage T4 genome.</title>
        <authorList>
            <person name="Miller E.S."/>
            <person name="Kutter E."/>
            <person name="Mosig G."/>
            <person name="Arisaka F."/>
            <person name="Kunisawa T."/>
            <person name="Ruger W."/>
        </authorList>
    </citation>
    <scope>NUCLEOTIDE SEQUENCE [LARGE SCALE GENOMIC DNA]</scope>
</reference>
<organismHost>
    <name type="scientific">Escherichia coli</name>
    <dbReference type="NCBI Taxonomy" id="562"/>
</organismHost>
<protein>
    <recommendedName>
        <fullName>Uncharacterized 7.2 kDa protein in Gp39-comCA intergenic region</fullName>
    </recommendedName>
</protein>
<name>Y00C_BPT4</name>
<organism>
    <name type="scientific">Enterobacteria phage T4</name>
    <name type="common">Bacteriophage T4</name>
    <dbReference type="NCBI Taxonomy" id="10665"/>
    <lineage>
        <taxon>Viruses</taxon>
        <taxon>Duplodnaviria</taxon>
        <taxon>Heunggongvirae</taxon>
        <taxon>Uroviricota</taxon>
        <taxon>Caudoviricetes</taxon>
        <taxon>Straboviridae</taxon>
        <taxon>Tevenvirinae</taxon>
        <taxon>Tequatrovirus</taxon>
    </lineage>
</organism>
<sequence length="65" mass="7156">MLINATKVLSSSGFTNIEITGYNWFGCSENDFQHTGFRAIGPTGQKVEGTVCSGLFFKDSTIRFK</sequence>
<gene>
    <name type="primary">y00C</name>
    <name type="synonym">39.1</name>
    <name type="synonym">comCA.-2</name>
</gene>
<feature type="chain" id="PRO_0000165078" description="Uncharacterized 7.2 kDa protein in Gp39-comCA intergenic region">
    <location>
        <begin position="1"/>
        <end position="65"/>
    </location>
</feature>
<keyword id="KW-1185">Reference proteome</keyword>